<gene>
    <name evidence="1" type="primary">uvrC</name>
    <name type="ordered locus">RL1587</name>
</gene>
<proteinExistence type="inferred from homology"/>
<accession>Q1MIX8</accession>
<name>UVRC_RHIJ3</name>
<feature type="chain" id="PRO_0000264931" description="UvrABC system protein C">
    <location>
        <begin position="1"/>
        <end position="680"/>
    </location>
</feature>
<feature type="domain" description="GIY-YIG" evidence="1">
    <location>
        <begin position="66"/>
        <end position="144"/>
    </location>
</feature>
<feature type="domain" description="UVR" evidence="1">
    <location>
        <begin position="254"/>
        <end position="289"/>
    </location>
</feature>
<reference key="1">
    <citation type="journal article" date="2006" name="Genome Biol.">
        <title>The genome of Rhizobium leguminosarum has recognizable core and accessory components.</title>
        <authorList>
            <person name="Young J.P.W."/>
            <person name="Crossman L.C."/>
            <person name="Johnston A.W.B."/>
            <person name="Thomson N.R."/>
            <person name="Ghazoui Z.F."/>
            <person name="Hull K.H."/>
            <person name="Wexler M."/>
            <person name="Curson A.R.J."/>
            <person name="Todd J.D."/>
            <person name="Poole P.S."/>
            <person name="Mauchline T.H."/>
            <person name="East A.K."/>
            <person name="Quail M.A."/>
            <person name="Churcher C."/>
            <person name="Arrowsmith C."/>
            <person name="Cherevach I."/>
            <person name="Chillingworth T."/>
            <person name="Clarke K."/>
            <person name="Cronin A."/>
            <person name="Davis P."/>
            <person name="Fraser A."/>
            <person name="Hance Z."/>
            <person name="Hauser H."/>
            <person name="Jagels K."/>
            <person name="Moule S."/>
            <person name="Mungall K."/>
            <person name="Norbertczak H."/>
            <person name="Rabbinowitsch E."/>
            <person name="Sanders M."/>
            <person name="Simmonds M."/>
            <person name="Whitehead S."/>
            <person name="Parkhill J."/>
        </authorList>
    </citation>
    <scope>NUCLEOTIDE SEQUENCE [LARGE SCALE GENOMIC DNA]</scope>
    <source>
        <strain>DSM 114642 / LMG 32736 / 3841</strain>
    </source>
</reference>
<comment type="function">
    <text evidence="1">The UvrABC repair system catalyzes the recognition and processing of DNA lesions. UvrC both incises the 5' and 3' sides of the lesion. The N-terminal half is responsible for the 3' incision and the C-terminal half is responsible for the 5' incision.</text>
</comment>
<comment type="subunit">
    <text evidence="1">Interacts with UvrB in an incision complex.</text>
</comment>
<comment type="subcellular location">
    <subcellularLocation>
        <location evidence="1">Cytoplasm</location>
    </subcellularLocation>
</comment>
<comment type="similarity">
    <text evidence="1">Belongs to the UvrC family.</text>
</comment>
<keyword id="KW-0963">Cytoplasm</keyword>
<keyword id="KW-0227">DNA damage</keyword>
<keyword id="KW-0228">DNA excision</keyword>
<keyword id="KW-0234">DNA repair</keyword>
<keyword id="KW-0267">Excision nuclease</keyword>
<keyword id="KW-0742">SOS response</keyword>
<evidence type="ECO:0000255" key="1">
    <source>
        <dbReference type="HAMAP-Rule" id="MF_00203"/>
    </source>
</evidence>
<protein>
    <recommendedName>
        <fullName evidence="1">UvrABC system protein C</fullName>
        <shortName evidence="1">Protein UvrC</shortName>
    </recommendedName>
    <alternativeName>
        <fullName evidence="1">Excinuclease ABC subunit C</fullName>
    </alternativeName>
</protein>
<sequence length="680" mass="75164">MNGRKLPDGGVLYDDTDESEDDIEVEGDASVAAPLAATVDWNAGSLNETGLLGAELIGEFVKRLPNSPGVYRMFNAEGDVLYVGKARSLKKRVNNYAVGRVHSNRIAQMVRQTANMEFVTTRTETEALLLEANLIKRLRPRFNVLLRDDKSFPYILITGDHRAPAIFKHRGARARKGDYFGPFASAGAVGRTINSLQRAFLIRTCTDSVFETRTRPCLLYQIKRCSGPCTHEVSDGGYGELVQEAKDFLSGKSQKVKSHMAEAMNQAAEDLDFERAAIYRDRLAALSHVQSHQGINPAGVEEADVFAIHHEGGISCIQVFFFRTGQNWGNRAYFPKADPQLSSAEVLNSFLAQFYDDKPVPKQIMLSQTVEELELLAAALSEKAGHKVSMLVPQRGEKRDLVDHVVGNAREAHGRKLAETASQSRLLEGFKETFGLAYAPQRIEIYDNSHIMGTNAVGGMVVAGPEGFVKNQYRKFNIKSTDITPGDDFGMMKEVMTRRFSRLIKEEGIPDRTAQVATPDAADMPFPTWPDVILIDGGQGQMTAVRAILAELGITDSVTAIGIAKGVDRDAGRERFFPPGRESFTLPPRDPVLYFIQRMRDEAHRFAIGSHRARRKKEMIKNPLDEIGGIGPSRKRALLQHFGTAKAVSRAALSDLMAVEGISEAVARQVYNHFHDDAAK</sequence>
<organism>
    <name type="scientific">Rhizobium johnstonii (strain DSM 114642 / LMG 32736 / 3841)</name>
    <name type="common">Rhizobium leguminosarum bv. viciae</name>
    <dbReference type="NCBI Taxonomy" id="216596"/>
    <lineage>
        <taxon>Bacteria</taxon>
        <taxon>Pseudomonadati</taxon>
        <taxon>Pseudomonadota</taxon>
        <taxon>Alphaproteobacteria</taxon>
        <taxon>Hyphomicrobiales</taxon>
        <taxon>Rhizobiaceae</taxon>
        <taxon>Rhizobium/Agrobacterium group</taxon>
        <taxon>Rhizobium</taxon>
        <taxon>Rhizobium johnstonii</taxon>
    </lineage>
</organism>
<dbReference type="EMBL" id="AM236080">
    <property type="protein sequence ID" value="CAK07082.1"/>
    <property type="molecule type" value="Genomic_DNA"/>
</dbReference>
<dbReference type="RefSeq" id="WP_011651269.1">
    <property type="nucleotide sequence ID" value="NC_008380.1"/>
</dbReference>
<dbReference type="SMR" id="Q1MIX8"/>
<dbReference type="EnsemblBacteria" id="CAK07082">
    <property type="protein sequence ID" value="CAK07082"/>
    <property type="gene ID" value="RL1587"/>
</dbReference>
<dbReference type="KEGG" id="rle:RL1587"/>
<dbReference type="eggNOG" id="COG0322">
    <property type="taxonomic scope" value="Bacteria"/>
</dbReference>
<dbReference type="HOGENOM" id="CLU_014841_3_0_5"/>
<dbReference type="Proteomes" id="UP000006575">
    <property type="component" value="Chromosome"/>
</dbReference>
<dbReference type="GO" id="GO:0005737">
    <property type="term" value="C:cytoplasm"/>
    <property type="evidence" value="ECO:0007669"/>
    <property type="project" value="UniProtKB-SubCell"/>
</dbReference>
<dbReference type="GO" id="GO:0009380">
    <property type="term" value="C:excinuclease repair complex"/>
    <property type="evidence" value="ECO:0007669"/>
    <property type="project" value="InterPro"/>
</dbReference>
<dbReference type="GO" id="GO:0003677">
    <property type="term" value="F:DNA binding"/>
    <property type="evidence" value="ECO:0007669"/>
    <property type="project" value="UniProtKB-UniRule"/>
</dbReference>
<dbReference type="GO" id="GO:0009381">
    <property type="term" value="F:excinuclease ABC activity"/>
    <property type="evidence" value="ECO:0007669"/>
    <property type="project" value="UniProtKB-UniRule"/>
</dbReference>
<dbReference type="GO" id="GO:0006289">
    <property type="term" value="P:nucleotide-excision repair"/>
    <property type="evidence" value="ECO:0007669"/>
    <property type="project" value="UniProtKB-UniRule"/>
</dbReference>
<dbReference type="GO" id="GO:0009432">
    <property type="term" value="P:SOS response"/>
    <property type="evidence" value="ECO:0007669"/>
    <property type="project" value="UniProtKB-UniRule"/>
</dbReference>
<dbReference type="CDD" id="cd10434">
    <property type="entry name" value="GIY-YIG_UvrC_Cho"/>
    <property type="match status" value="1"/>
</dbReference>
<dbReference type="FunFam" id="3.30.420.340:FF:000001">
    <property type="entry name" value="UvrABC system protein C"/>
    <property type="match status" value="1"/>
</dbReference>
<dbReference type="FunFam" id="3.40.1440.10:FF:000001">
    <property type="entry name" value="UvrABC system protein C"/>
    <property type="match status" value="1"/>
</dbReference>
<dbReference type="Gene3D" id="1.10.150.20">
    <property type="entry name" value="5' to 3' exonuclease, C-terminal subdomain"/>
    <property type="match status" value="1"/>
</dbReference>
<dbReference type="Gene3D" id="3.40.1440.10">
    <property type="entry name" value="GIY-YIG endonuclease"/>
    <property type="match status" value="1"/>
</dbReference>
<dbReference type="Gene3D" id="4.10.860.10">
    <property type="entry name" value="UVR domain"/>
    <property type="match status" value="1"/>
</dbReference>
<dbReference type="Gene3D" id="3.30.420.340">
    <property type="entry name" value="UvrC, RNAse H endonuclease domain"/>
    <property type="match status" value="1"/>
</dbReference>
<dbReference type="HAMAP" id="MF_00203">
    <property type="entry name" value="UvrC"/>
    <property type="match status" value="1"/>
</dbReference>
<dbReference type="InterPro" id="IPR000305">
    <property type="entry name" value="GIY-YIG_endonuc"/>
</dbReference>
<dbReference type="InterPro" id="IPR035901">
    <property type="entry name" value="GIY-YIG_endonuc_sf"/>
</dbReference>
<dbReference type="InterPro" id="IPR047296">
    <property type="entry name" value="GIY-YIG_UvrC_Cho"/>
</dbReference>
<dbReference type="InterPro" id="IPR003583">
    <property type="entry name" value="Hlx-hairpin-Hlx_DNA-bd_motif"/>
</dbReference>
<dbReference type="InterPro" id="IPR010994">
    <property type="entry name" value="RuvA_2-like"/>
</dbReference>
<dbReference type="InterPro" id="IPR001943">
    <property type="entry name" value="UVR_dom"/>
</dbReference>
<dbReference type="InterPro" id="IPR036876">
    <property type="entry name" value="UVR_dom_sf"/>
</dbReference>
<dbReference type="InterPro" id="IPR050066">
    <property type="entry name" value="UvrABC_protein_C"/>
</dbReference>
<dbReference type="InterPro" id="IPR004791">
    <property type="entry name" value="UvrC"/>
</dbReference>
<dbReference type="InterPro" id="IPR001162">
    <property type="entry name" value="UvrC_RNase_H_dom"/>
</dbReference>
<dbReference type="InterPro" id="IPR038476">
    <property type="entry name" value="UvrC_RNase_H_dom_sf"/>
</dbReference>
<dbReference type="NCBIfam" id="NF001824">
    <property type="entry name" value="PRK00558.1-5"/>
    <property type="match status" value="1"/>
</dbReference>
<dbReference type="NCBIfam" id="TIGR00194">
    <property type="entry name" value="uvrC"/>
    <property type="match status" value="1"/>
</dbReference>
<dbReference type="PANTHER" id="PTHR30562:SF1">
    <property type="entry name" value="UVRABC SYSTEM PROTEIN C"/>
    <property type="match status" value="1"/>
</dbReference>
<dbReference type="PANTHER" id="PTHR30562">
    <property type="entry name" value="UVRC/OXIDOREDUCTASE"/>
    <property type="match status" value="1"/>
</dbReference>
<dbReference type="Pfam" id="PF01541">
    <property type="entry name" value="GIY-YIG"/>
    <property type="match status" value="1"/>
</dbReference>
<dbReference type="Pfam" id="PF14520">
    <property type="entry name" value="HHH_5"/>
    <property type="match status" value="1"/>
</dbReference>
<dbReference type="Pfam" id="PF02151">
    <property type="entry name" value="UVR"/>
    <property type="match status" value="1"/>
</dbReference>
<dbReference type="Pfam" id="PF22920">
    <property type="entry name" value="UvrC_RNaseH"/>
    <property type="match status" value="1"/>
</dbReference>
<dbReference type="Pfam" id="PF08459">
    <property type="entry name" value="UvrC_RNaseH_dom"/>
    <property type="match status" value="1"/>
</dbReference>
<dbReference type="SMART" id="SM00465">
    <property type="entry name" value="GIYc"/>
    <property type="match status" value="1"/>
</dbReference>
<dbReference type="SMART" id="SM00278">
    <property type="entry name" value="HhH1"/>
    <property type="match status" value="2"/>
</dbReference>
<dbReference type="SUPFAM" id="SSF46600">
    <property type="entry name" value="C-terminal UvrC-binding domain of UvrB"/>
    <property type="match status" value="1"/>
</dbReference>
<dbReference type="SUPFAM" id="SSF82771">
    <property type="entry name" value="GIY-YIG endonuclease"/>
    <property type="match status" value="1"/>
</dbReference>
<dbReference type="SUPFAM" id="SSF47781">
    <property type="entry name" value="RuvA domain 2-like"/>
    <property type="match status" value="1"/>
</dbReference>
<dbReference type="PROSITE" id="PS50164">
    <property type="entry name" value="GIY_YIG"/>
    <property type="match status" value="1"/>
</dbReference>
<dbReference type="PROSITE" id="PS50151">
    <property type="entry name" value="UVR"/>
    <property type="match status" value="1"/>
</dbReference>
<dbReference type="PROSITE" id="PS50165">
    <property type="entry name" value="UVRC"/>
    <property type="match status" value="1"/>
</dbReference>